<organism>
    <name type="scientific">Haemophilus influenzae (strain PittGG)</name>
    <dbReference type="NCBI Taxonomy" id="374931"/>
    <lineage>
        <taxon>Bacteria</taxon>
        <taxon>Pseudomonadati</taxon>
        <taxon>Pseudomonadota</taxon>
        <taxon>Gammaproteobacteria</taxon>
        <taxon>Pasteurellales</taxon>
        <taxon>Pasteurellaceae</taxon>
        <taxon>Haemophilus</taxon>
    </lineage>
</organism>
<sequence length="283" mass="30780">MMRILLFLATNMAVMLVLGIILSVTGIAGNSTGGILIMALLFGFAGSLISLFLSKTMALRSVDGEVITQPRNQTERWLIDTVSRQAQKAGIPMPDVAIYHSPDVNAFATGATKSNSLVAVSTGLLNNMTEAEAEAVLAHEISHISNGDMVTMALLQGVLNTFVIFLSRVIATAVASSRNNNGEETRSSGIYFLVSMVLEMLFGVLASIIAMWFSRYREFRADAGSASLVGKEKMIMALQRLQQLHEPQNLEGSLNAFMINGKRSELFMSHPPLEKRIEALRNL</sequence>
<feature type="chain" id="PRO_1000020869" description="Protease HtpX">
    <location>
        <begin position="1"/>
        <end position="283"/>
    </location>
</feature>
<feature type="transmembrane region" description="Helical" evidence="1">
    <location>
        <begin position="4"/>
        <end position="24"/>
    </location>
</feature>
<feature type="transmembrane region" description="Helical" evidence="1">
    <location>
        <begin position="33"/>
        <end position="53"/>
    </location>
</feature>
<feature type="transmembrane region" description="Helical" evidence="1">
    <location>
        <begin position="147"/>
        <end position="167"/>
    </location>
</feature>
<feature type="transmembrane region" description="Helical" evidence="1">
    <location>
        <begin position="190"/>
        <end position="210"/>
    </location>
</feature>
<feature type="active site" evidence="1">
    <location>
        <position position="140"/>
    </location>
</feature>
<feature type="binding site" evidence="1">
    <location>
        <position position="139"/>
    </location>
    <ligand>
        <name>Zn(2+)</name>
        <dbReference type="ChEBI" id="CHEBI:29105"/>
        <note>catalytic</note>
    </ligand>
</feature>
<feature type="binding site" evidence="1">
    <location>
        <position position="143"/>
    </location>
    <ligand>
        <name>Zn(2+)</name>
        <dbReference type="ChEBI" id="CHEBI:29105"/>
        <note>catalytic</note>
    </ligand>
</feature>
<feature type="binding site" evidence="1">
    <location>
        <position position="218"/>
    </location>
    <ligand>
        <name>Zn(2+)</name>
        <dbReference type="ChEBI" id="CHEBI:29105"/>
        <note>catalytic</note>
    </ligand>
</feature>
<name>HTPX_HAEIG</name>
<keyword id="KW-0997">Cell inner membrane</keyword>
<keyword id="KW-1003">Cell membrane</keyword>
<keyword id="KW-0378">Hydrolase</keyword>
<keyword id="KW-0472">Membrane</keyword>
<keyword id="KW-0479">Metal-binding</keyword>
<keyword id="KW-0482">Metalloprotease</keyword>
<keyword id="KW-0645">Protease</keyword>
<keyword id="KW-0346">Stress response</keyword>
<keyword id="KW-0812">Transmembrane</keyword>
<keyword id="KW-1133">Transmembrane helix</keyword>
<keyword id="KW-0862">Zinc</keyword>
<comment type="cofactor">
    <cofactor evidence="1">
        <name>Zn(2+)</name>
        <dbReference type="ChEBI" id="CHEBI:29105"/>
    </cofactor>
    <text evidence="1">Binds 1 zinc ion per subunit.</text>
</comment>
<comment type="subcellular location">
    <subcellularLocation>
        <location evidence="1">Cell inner membrane</location>
        <topology evidence="1">Multi-pass membrane protein</topology>
    </subcellularLocation>
</comment>
<comment type="similarity">
    <text evidence="1">Belongs to the peptidase M48B family.</text>
</comment>
<evidence type="ECO:0000255" key="1">
    <source>
        <dbReference type="HAMAP-Rule" id="MF_00188"/>
    </source>
</evidence>
<protein>
    <recommendedName>
        <fullName evidence="1">Protease HtpX</fullName>
        <ecNumber evidence="1">3.4.24.-</ecNumber>
    </recommendedName>
    <alternativeName>
        <fullName evidence="1">Heat shock protein HtpX</fullName>
    </alternativeName>
</protein>
<dbReference type="EC" id="3.4.24.-" evidence="1"/>
<dbReference type="EMBL" id="CP000672">
    <property type="protein sequence ID" value="ABR00258.1"/>
    <property type="molecule type" value="Genomic_DNA"/>
</dbReference>
<dbReference type="SMR" id="A5UHK2"/>
<dbReference type="MEROPS" id="M48.002"/>
<dbReference type="KEGG" id="hiq:CGSHiGG_06915"/>
<dbReference type="HOGENOM" id="CLU_042266_1_0_6"/>
<dbReference type="Proteomes" id="UP000001990">
    <property type="component" value="Chromosome"/>
</dbReference>
<dbReference type="GO" id="GO:0005886">
    <property type="term" value="C:plasma membrane"/>
    <property type="evidence" value="ECO:0007669"/>
    <property type="project" value="UniProtKB-SubCell"/>
</dbReference>
<dbReference type="GO" id="GO:0004222">
    <property type="term" value="F:metalloendopeptidase activity"/>
    <property type="evidence" value="ECO:0007669"/>
    <property type="project" value="UniProtKB-UniRule"/>
</dbReference>
<dbReference type="GO" id="GO:0008270">
    <property type="term" value="F:zinc ion binding"/>
    <property type="evidence" value="ECO:0007669"/>
    <property type="project" value="UniProtKB-UniRule"/>
</dbReference>
<dbReference type="GO" id="GO:0006508">
    <property type="term" value="P:proteolysis"/>
    <property type="evidence" value="ECO:0007669"/>
    <property type="project" value="UniProtKB-KW"/>
</dbReference>
<dbReference type="CDD" id="cd07335">
    <property type="entry name" value="M48B_HtpX_like"/>
    <property type="match status" value="1"/>
</dbReference>
<dbReference type="FunFam" id="3.30.2010.10:FF:000001">
    <property type="entry name" value="Protease HtpX"/>
    <property type="match status" value="1"/>
</dbReference>
<dbReference type="Gene3D" id="3.30.2010.10">
    <property type="entry name" value="Metalloproteases ('zincins'), catalytic domain"/>
    <property type="match status" value="1"/>
</dbReference>
<dbReference type="HAMAP" id="MF_00188">
    <property type="entry name" value="Pept_M48_protease_HtpX"/>
    <property type="match status" value="1"/>
</dbReference>
<dbReference type="InterPro" id="IPR050083">
    <property type="entry name" value="HtpX_protease"/>
</dbReference>
<dbReference type="InterPro" id="IPR022919">
    <property type="entry name" value="Pept_M48_protease_HtpX"/>
</dbReference>
<dbReference type="InterPro" id="IPR001915">
    <property type="entry name" value="Peptidase_M48"/>
</dbReference>
<dbReference type="NCBIfam" id="NF003965">
    <property type="entry name" value="PRK05457.1"/>
    <property type="match status" value="1"/>
</dbReference>
<dbReference type="PANTHER" id="PTHR43221">
    <property type="entry name" value="PROTEASE HTPX"/>
    <property type="match status" value="1"/>
</dbReference>
<dbReference type="PANTHER" id="PTHR43221:SF1">
    <property type="entry name" value="PROTEASE HTPX"/>
    <property type="match status" value="1"/>
</dbReference>
<dbReference type="Pfam" id="PF01435">
    <property type="entry name" value="Peptidase_M48"/>
    <property type="match status" value="1"/>
</dbReference>
<dbReference type="PROSITE" id="PS00142">
    <property type="entry name" value="ZINC_PROTEASE"/>
    <property type="match status" value="1"/>
</dbReference>
<accession>A5UHK2</accession>
<proteinExistence type="inferred from homology"/>
<reference key="1">
    <citation type="journal article" date="2007" name="Genome Biol.">
        <title>Characterization and modeling of the Haemophilus influenzae core and supragenomes based on the complete genomic sequences of Rd and 12 clinical nontypeable strains.</title>
        <authorList>
            <person name="Hogg J.S."/>
            <person name="Hu F.Z."/>
            <person name="Janto B."/>
            <person name="Boissy R."/>
            <person name="Hayes J."/>
            <person name="Keefe R."/>
            <person name="Post J.C."/>
            <person name="Ehrlich G.D."/>
        </authorList>
    </citation>
    <scope>NUCLEOTIDE SEQUENCE [LARGE SCALE GENOMIC DNA]</scope>
    <source>
        <strain>PittGG</strain>
    </source>
</reference>
<gene>
    <name evidence="1" type="primary">htpX</name>
    <name type="ordered locus">CGSHiGG_06915</name>
</gene>